<evidence type="ECO:0000255" key="1">
    <source>
        <dbReference type="HAMAP-Rule" id="MF_01031"/>
    </source>
</evidence>
<gene>
    <name evidence="1" type="primary">leuD</name>
    <name type="ordered locus">MAV_3837</name>
</gene>
<reference key="1">
    <citation type="submission" date="2006-10" db="EMBL/GenBank/DDBJ databases">
        <authorList>
            <person name="Fleischmann R.D."/>
            <person name="Dodson R.J."/>
            <person name="Haft D.H."/>
            <person name="Merkel J.S."/>
            <person name="Nelson W.C."/>
            <person name="Fraser C.M."/>
        </authorList>
    </citation>
    <scope>NUCLEOTIDE SEQUENCE [LARGE SCALE GENOMIC DNA]</scope>
    <source>
        <strain>104</strain>
    </source>
</reference>
<organism>
    <name type="scientific">Mycobacterium avium (strain 104)</name>
    <dbReference type="NCBI Taxonomy" id="243243"/>
    <lineage>
        <taxon>Bacteria</taxon>
        <taxon>Bacillati</taxon>
        <taxon>Actinomycetota</taxon>
        <taxon>Actinomycetes</taxon>
        <taxon>Mycobacteriales</taxon>
        <taxon>Mycobacteriaceae</taxon>
        <taxon>Mycobacterium</taxon>
        <taxon>Mycobacterium avium complex (MAC)</taxon>
    </lineage>
</organism>
<comment type="function">
    <text evidence="1">Catalyzes the isomerization between 2-isopropylmalate and 3-isopropylmalate, via the formation of 2-isopropylmaleate.</text>
</comment>
<comment type="catalytic activity">
    <reaction evidence="1">
        <text>(2R,3S)-3-isopropylmalate = (2S)-2-isopropylmalate</text>
        <dbReference type="Rhea" id="RHEA:32287"/>
        <dbReference type="ChEBI" id="CHEBI:1178"/>
        <dbReference type="ChEBI" id="CHEBI:35121"/>
        <dbReference type="EC" id="4.2.1.33"/>
    </reaction>
</comment>
<comment type="pathway">
    <text evidence="1">Amino-acid biosynthesis; L-leucine biosynthesis; L-leucine from 3-methyl-2-oxobutanoate: step 2/4.</text>
</comment>
<comment type="subunit">
    <text evidence="1">Heterodimer of LeuC and LeuD.</text>
</comment>
<comment type="similarity">
    <text evidence="1">Belongs to the LeuD family. LeuD type 1 subfamily.</text>
</comment>
<name>LEUD_MYCA1</name>
<proteinExistence type="inferred from homology"/>
<protein>
    <recommendedName>
        <fullName evidence="1">3-isopropylmalate dehydratase small subunit</fullName>
        <ecNumber evidence="1">4.2.1.33</ecNumber>
    </recommendedName>
    <alternativeName>
        <fullName evidence="1">Alpha-IPM isomerase</fullName>
        <shortName evidence="1">IPMI</shortName>
    </alternativeName>
    <alternativeName>
        <fullName evidence="1">Isopropylmalate isomerase</fullName>
    </alternativeName>
</protein>
<accession>A0QJB6</accession>
<feature type="chain" id="PRO_1000063787" description="3-isopropylmalate dehydratase small subunit">
    <location>
        <begin position="1"/>
        <end position="198"/>
    </location>
</feature>
<keyword id="KW-0028">Amino-acid biosynthesis</keyword>
<keyword id="KW-0100">Branched-chain amino acid biosynthesis</keyword>
<keyword id="KW-0432">Leucine biosynthesis</keyword>
<keyword id="KW-0456">Lyase</keyword>
<dbReference type="EC" id="4.2.1.33" evidence="1"/>
<dbReference type="EMBL" id="CP000479">
    <property type="protein sequence ID" value="ABK67281.1"/>
    <property type="molecule type" value="Genomic_DNA"/>
</dbReference>
<dbReference type="RefSeq" id="WP_011725707.1">
    <property type="nucleotide sequence ID" value="NC_008595.1"/>
</dbReference>
<dbReference type="SMR" id="A0QJB6"/>
<dbReference type="GeneID" id="75271237"/>
<dbReference type="KEGG" id="mav:MAV_3837"/>
<dbReference type="HOGENOM" id="CLU_081378_0_1_11"/>
<dbReference type="UniPathway" id="UPA00048">
    <property type="reaction ID" value="UER00071"/>
</dbReference>
<dbReference type="Proteomes" id="UP000001574">
    <property type="component" value="Chromosome"/>
</dbReference>
<dbReference type="GO" id="GO:0009316">
    <property type="term" value="C:3-isopropylmalate dehydratase complex"/>
    <property type="evidence" value="ECO:0007669"/>
    <property type="project" value="InterPro"/>
</dbReference>
<dbReference type="GO" id="GO:0003861">
    <property type="term" value="F:3-isopropylmalate dehydratase activity"/>
    <property type="evidence" value="ECO:0007669"/>
    <property type="project" value="UniProtKB-UniRule"/>
</dbReference>
<dbReference type="GO" id="GO:0009098">
    <property type="term" value="P:L-leucine biosynthetic process"/>
    <property type="evidence" value="ECO:0007669"/>
    <property type="project" value="UniProtKB-UniRule"/>
</dbReference>
<dbReference type="CDD" id="cd01577">
    <property type="entry name" value="IPMI_Swivel"/>
    <property type="match status" value="1"/>
</dbReference>
<dbReference type="FunFam" id="3.20.19.10:FF:000003">
    <property type="entry name" value="3-isopropylmalate dehydratase small subunit"/>
    <property type="match status" value="1"/>
</dbReference>
<dbReference type="Gene3D" id="3.20.19.10">
    <property type="entry name" value="Aconitase, domain 4"/>
    <property type="match status" value="1"/>
</dbReference>
<dbReference type="HAMAP" id="MF_01031">
    <property type="entry name" value="LeuD_type1"/>
    <property type="match status" value="1"/>
</dbReference>
<dbReference type="InterPro" id="IPR004431">
    <property type="entry name" value="3-IsopropMal_deHydase_ssu"/>
</dbReference>
<dbReference type="InterPro" id="IPR015928">
    <property type="entry name" value="Aconitase/3IPM_dehydase_swvl"/>
</dbReference>
<dbReference type="InterPro" id="IPR000573">
    <property type="entry name" value="AconitaseA/IPMdHydase_ssu_swvl"/>
</dbReference>
<dbReference type="InterPro" id="IPR033940">
    <property type="entry name" value="IPMI_Swivel"/>
</dbReference>
<dbReference type="InterPro" id="IPR050075">
    <property type="entry name" value="LeuD"/>
</dbReference>
<dbReference type="NCBIfam" id="TIGR00171">
    <property type="entry name" value="leuD"/>
    <property type="match status" value="1"/>
</dbReference>
<dbReference type="NCBIfam" id="NF002458">
    <property type="entry name" value="PRK01641.1"/>
    <property type="match status" value="1"/>
</dbReference>
<dbReference type="PANTHER" id="PTHR43345:SF5">
    <property type="entry name" value="3-ISOPROPYLMALATE DEHYDRATASE SMALL SUBUNIT"/>
    <property type="match status" value="1"/>
</dbReference>
<dbReference type="PANTHER" id="PTHR43345">
    <property type="entry name" value="3-ISOPROPYLMALATE DEHYDRATASE SMALL SUBUNIT 2-RELATED-RELATED"/>
    <property type="match status" value="1"/>
</dbReference>
<dbReference type="Pfam" id="PF00694">
    <property type="entry name" value="Aconitase_C"/>
    <property type="match status" value="1"/>
</dbReference>
<dbReference type="SUPFAM" id="SSF52016">
    <property type="entry name" value="LeuD/IlvD-like"/>
    <property type="match status" value="1"/>
</dbReference>
<sequence>MEAFHTHTGIGVPLRRSNVDTDQIIPAVYLKRVTRTGFEDGLFASWRSDPSFVLNLSPFDRGSVLVAGPDFGTGSSREHAVWALMDYGFRVVISSRFGDIFRGNAGKAGLLAAEVSQDGVELLWKLIEQSPGLEITANLQDRNITAGTTVLPFKIDDHTAWRLLEGLDDIALTLRKLDRIESYEAAYPDWKPRTSPVA</sequence>